<feature type="chain" id="PRO_0000253543" description="Large ribosomal subunit protein mL63">
    <location>
        <begin position="1"/>
        <end position="103"/>
    </location>
</feature>
<name>RT63_DANRE</name>
<keyword id="KW-0496">Mitochondrion</keyword>
<keyword id="KW-1185">Reference proteome</keyword>
<keyword id="KW-0687">Ribonucleoprotein</keyword>
<keyword id="KW-0689">Ribosomal protein</keyword>
<reference key="1">
    <citation type="submission" date="2003-10" db="EMBL/GenBank/DDBJ databases">
        <authorList>
            <consortium name="NIH - Zebrafish Gene Collection (ZGC) project"/>
        </authorList>
    </citation>
    <scope>NUCLEOTIDE SEQUENCE [LARGE SCALE MRNA]</scope>
    <source>
        <tissue>Retina</tissue>
    </source>
</reference>
<protein>
    <recommendedName>
        <fullName evidence="2">Large ribosomal subunit protein mL63</fullName>
    </recommendedName>
    <alternativeName>
        <fullName>Mitochondrial ribosomal protein 63</fullName>
    </alternativeName>
    <alternativeName>
        <fullName>Mitochondrial ribosomal protein L57</fullName>
    </alternativeName>
    <alternativeName>
        <fullName>Ribosomal protein 63, mitochondrial</fullName>
    </alternativeName>
</protein>
<dbReference type="EMBL" id="BC059609">
    <property type="protein sequence ID" value="AAH59609.1"/>
    <property type="molecule type" value="mRNA"/>
</dbReference>
<dbReference type="RefSeq" id="NP_957069.1">
    <property type="nucleotide sequence ID" value="NM_200775.1"/>
</dbReference>
<dbReference type="SMR" id="Q6PBR7"/>
<dbReference type="FunCoup" id="Q6PBR7">
    <property type="interactions" value="2589"/>
</dbReference>
<dbReference type="STRING" id="7955.ENSDARP00000002120"/>
<dbReference type="PaxDb" id="7955-ENSDARP00000119580"/>
<dbReference type="Ensembl" id="ENSDART00000016608">
    <property type="protein sequence ID" value="ENSDARP00000002120"/>
    <property type="gene ID" value="ENSDARG00000007285"/>
</dbReference>
<dbReference type="GeneID" id="393748"/>
<dbReference type="KEGG" id="dre:393748"/>
<dbReference type="AGR" id="ZFIN:ZDB-GENE-040426-1745"/>
<dbReference type="CTD" id="78988"/>
<dbReference type="ZFIN" id="ZDB-GENE-040426-1745">
    <property type="gene designation" value="mrpl57"/>
</dbReference>
<dbReference type="eggNOG" id="ENOG502S44A">
    <property type="taxonomic scope" value="Eukaryota"/>
</dbReference>
<dbReference type="HOGENOM" id="CLU_175792_1_0_1"/>
<dbReference type="InParanoid" id="Q6PBR7"/>
<dbReference type="OrthoDB" id="6019958at2759"/>
<dbReference type="PhylomeDB" id="Q6PBR7"/>
<dbReference type="TreeFam" id="TF324466"/>
<dbReference type="Reactome" id="R-DRE-5389840">
    <property type="pathway name" value="Mitochondrial translation elongation"/>
</dbReference>
<dbReference type="Reactome" id="R-DRE-5419276">
    <property type="pathway name" value="Mitochondrial translation termination"/>
</dbReference>
<dbReference type="PRO" id="PR:Q6PBR7"/>
<dbReference type="Proteomes" id="UP000000437">
    <property type="component" value="Chromosome 17"/>
</dbReference>
<dbReference type="Bgee" id="ENSDARG00000007285">
    <property type="expression patterns" value="Expressed in muscle tissue and 28 other cell types or tissues"/>
</dbReference>
<dbReference type="ExpressionAtlas" id="Q6PBR7">
    <property type="expression patterns" value="baseline and differential"/>
</dbReference>
<dbReference type="GO" id="GO:0005761">
    <property type="term" value="C:mitochondrial ribosome"/>
    <property type="evidence" value="ECO:0000318"/>
    <property type="project" value="GO_Central"/>
</dbReference>
<dbReference type="GO" id="GO:1990904">
    <property type="term" value="C:ribonucleoprotein complex"/>
    <property type="evidence" value="ECO:0007669"/>
    <property type="project" value="UniProtKB-KW"/>
</dbReference>
<dbReference type="GO" id="GO:0003735">
    <property type="term" value="F:structural constituent of ribosome"/>
    <property type="evidence" value="ECO:0000318"/>
    <property type="project" value="GO_Central"/>
</dbReference>
<dbReference type="InterPro" id="IPR016576">
    <property type="entry name" value="Ribosomal_mL63"/>
</dbReference>
<dbReference type="PANTHER" id="PTHR14520:SF4">
    <property type="entry name" value="LARGE RIBOSOMAL SUBUNIT PROTEIN ML63"/>
    <property type="match status" value="1"/>
</dbReference>
<dbReference type="PANTHER" id="PTHR14520">
    <property type="entry name" value="MITOCHONDRIAL RIBOSOMAL PROTEIN 63"/>
    <property type="match status" value="1"/>
</dbReference>
<dbReference type="Pfam" id="PF14978">
    <property type="entry name" value="MRP-63"/>
    <property type="match status" value="1"/>
</dbReference>
<dbReference type="PIRSF" id="PIRSF011124">
    <property type="entry name" value="MRP63"/>
    <property type="match status" value="1"/>
</dbReference>
<sequence>MFLTLALLRKGIPGKQWIGKYRRPRPVTWQIKRNVIKRLEQEAENEYWISRPFMTLEQERGHAAQRREWMWQQIKAERQAKFPEHKYIADQLNHLRVTKTWPS</sequence>
<organism>
    <name type="scientific">Danio rerio</name>
    <name type="common">Zebrafish</name>
    <name type="synonym">Brachydanio rerio</name>
    <dbReference type="NCBI Taxonomy" id="7955"/>
    <lineage>
        <taxon>Eukaryota</taxon>
        <taxon>Metazoa</taxon>
        <taxon>Chordata</taxon>
        <taxon>Craniata</taxon>
        <taxon>Vertebrata</taxon>
        <taxon>Euteleostomi</taxon>
        <taxon>Actinopterygii</taxon>
        <taxon>Neopterygii</taxon>
        <taxon>Teleostei</taxon>
        <taxon>Ostariophysi</taxon>
        <taxon>Cypriniformes</taxon>
        <taxon>Danionidae</taxon>
        <taxon>Danioninae</taxon>
        <taxon>Danio</taxon>
    </lineage>
</organism>
<proteinExistence type="inferred from homology"/>
<accession>Q6PBR7</accession>
<evidence type="ECO:0000250" key="1"/>
<evidence type="ECO:0000305" key="2"/>
<comment type="subcellular location">
    <subcellularLocation>
        <location evidence="1">Mitochondrion</location>
    </subcellularLocation>
</comment>
<comment type="similarity">
    <text evidence="2">Belongs to the mitochondrion-specific ribosomal protein mL63 family.</text>
</comment>
<gene>
    <name type="primary">mrpl57</name>
    <name type="synonym">mrp63</name>
    <name type="ORF">zgc:73280</name>
</gene>